<protein>
    <recommendedName>
        <fullName>Glutaredoxin-2, mitochondrial</fullName>
    </recommendedName>
</protein>
<reference key="1">
    <citation type="journal article" date="2001" name="J. Biol. Chem.">
        <title>Identification and characterization of a new mammalian glutaredoxin (thioltransferase), Grx2.</title>
        <authorList>
            <person name="Gladyshev V.N."/>
            <person name="Liu A."/>
            <person name="Novoselov S.V."/>
            <person name="Krysan K."/>
            <person name="Sun Q.-A."/>
            <person name="Kryukov V.M."/>
            <person name="Kryukov G.V."/>
            <person name="Lou M.F."/>
        </authorList>
    </citation>
    <scope>NUCLEOTIDE SEQUENCE [MRNA] (ISOFORM 1)</scope>
    <scope>ALTERNATIVE SPLICING (ISOFORMS 1 AND 2)</scope>
    <scope>FUNCTION</scope>
    <scope>BIOPHYSICOCHEMICAL PROPERTIES</scope>
    <scope>SUBCELLULAR LOCATION</scope>
</reference>
<reference key="2">
    <citation type="submission" date="2000-06" db="EMBL/GenBank/DDBJ databases">
        <authorList>
            <person name="Reddy P.G."/>
            <person name="Bhuyan D.K."/>
            <person name="Bhuyan K.C."/>
        </authorList>
    </citation>
    <scope>NUCLEOTIDE SEQUENCE [MRNA] (ISOFORM 2)</scope>
    <source>
        <strain>CFW</strain>
        <tissue>Lens</tissue>
    </source>
</reference>
<reference key="3">
    <citation type="journal article" date="2005" name="Science">
        <title>The transcriptional landscape of the mammalian genome.</title>
        <authorList>
            <person name="Carninci P."/>
            <person name="Kasukawa T."/>
            <person name="Katayama S."/>
            <person name="Gough J."/>
            <person name="Frith M.C."/>
            <person name="Maeda N."/>
            <person name="Oyama R."/>
            <person name="Ravasi T."/>
            <person name="Lenhard B."/>
            <person name="Wells C."/>
            <person name="Kodzius R."/>
            <person name="Shimokawa K."/>
            <person name="Bajic V.B."/>
            <person name="Brenner S.E."/>
            <person name="Batalov S."/>
            <person name="Forrest A.R."/>
            <person name="Zavolan M."/>
            <person name="Davis M.J."/>
            <person name="Wilming L.G."/>
            <person name="Aidinis V."/>
            <person name="Allen J.E."/>
            <person name="Ambesi-Impiombato A."/>
            <person name="Apweiler R."/>
            <person name="Aturaliya R.N."/>
            <person name="Bailey T.L."/>
            <person name="Bansal M."/>
            <person name="Baxter L."/>
            <person name="Beisel K.W."/>
            <person name="Bersano T."/>
            <person name="Bono H."/>
            <person name="Chalk A.M."/>
            <person name="Chiu K.P."/>
            <person name="Choudhary V."/>
            <person name="Christoffels A."/>
            <person name="Clutterbuck D.R."/>
            <person name="Crowe M.L."/>
            <person name="Dalla E."/>
            <person name="Dalrymple B.P."/>
            <person name="de Bono B."/>
            <person name="Della Gatta G."/>
            <person name="di Bernardo D."/>
            <person name="Down T."/>
            <person name="Engstrom P."/>
            <person name="Fagiolini M."/>
            <person name="Faulkner G."/>
            <person name="Fletcher C.F."/>
            <person name="Fukushima T."/>
            <person name="Furuno M."/>
            <person name="Futaki S."/>
            <person name="Gariboldi M."/>
            <person name="Georgii-Hemming P."/>
            <person name="Gingeras T.R."/>
            <person name="Gojobori T."/>
            <person name="Green R.E."/>
            <person name="Gustincich S."/>
            <person name="Harbers M."/>
            <person name="Hayashi Y."/>
            <person name="Hensch T.K."/>
            <person name="Hirokawa N."/>
            <person name="Hill D."/>
            <person name="Huminiecki L."/>
            <person name="Iacono M."/>
            <person name="Ikeo K."/>
            <person name="Iwama A."/>
            <person name="Ishikawa T."/>
            <person name="Jakt M."/>
            <person name="Kanapin A."/>
            <person name="Katoh M."/>
            <person name="Kawasawa Y."/>
            <person name="Kelso J."/>
            <person name="Kitamura H."/>
            <person name="Kitano H."/>
            <person name="Kollias G."/>
            <person name="Krishnan S.P."/>
            <person name="Kruger A."/>
            <person name="Kummerfeld S.K."/>
            <person name="Kurochkin I.V."/>
            <person name="Lareau L.F."/>
            <person name="Lazarevic D."/>
            <person name="Lipovich L."/>
            <person name="Liu J."/>
            <person name="Liuni S."/>
            <person name="McWilliam S."/>
            <person name="Madan Babu M."/>
            <person name="Madera M."/>
            <person name="Marchionni L."/>
            <person name="Matsuda H."/>
            <person name="Matsuzawa S."/>
            <person name="Miki H."/>
            <person name="Mignone F."/>
            <person name="Miyake S."/>
            <person name="Morris K."/>
            <person name="Mottagui-Tabar S."/>
            <person name="Mulder N."/>
            <person name="Nakano N."/>
            <person name="Nakauchi H."/>
            <person name="Ng P."/>
            <person name="Nilsson R."/>
            <person name="Nishiguchi S."/>
            <person name="Nishikawa S."/>
            <person name="Nori F."/>
            <person name="Ohara O."/>
            <person name="Okazaki Y."/>
            <person name="Orlando V."/>
            <person name="Pang K.C."/>
            <person name="Pavan W.J."/>
            <person name="Pavesi G."/>
            <person name="Pesole G."/>
            <person name="Petrovsky N."/>
            <person name="Piazza S."/>
            <person name="Reed J."/>
            <person name="Reid J.F."/>
            <person name="Ring B.Z."/>
            <person name="Ringwald M."/>
            <person name="Rost B."/>
            <person name="Ruan Y."/>
            <person name="Salzberg S.L."/>
            <person name="Sandelin A."/>
            <person name="Schneider C."/>
            <person name="Schoenbach C."/>
            <person name="Sekiguchi K."/>
            <person name="Semple C.A."/>
            <person name="Seno S."/>
            <person name="Sessa L."/>
            <person name="Sheng Y."/>
            <person name="Shibata Y."/>
            <person name="Shimada H."/>
            <person name="Shimada K."/>
            <person name="Silva D."/>
            <person name="Sinclair B."/>
            <person name="Sperling S."/>
            <person name="Stupka E."/>
            <person name="Sugiura K."/>
            <person name="Sultana R."/>
            <person name="Takenaka Y."/>
            <person name="Taki K."/>
            <person name="Tammoja K."/>
            <person name="Tan S.L."/>
            <person name="Tang S."/>
            <person name="Taylor M.S."/>
            <person name="Tegner J."/>
            <person name="Teichmann S.A."/>
            <person name="Ueda H.R."/>
            <person name="van Nimwegen E."/>
            <person name="Verardo R."/>
            <person name="Wei C.L."/>
            <person name="Yagi K."/>
            <person name="Yamanishi H."/>
            <person name="Zabarovsky E."/>
            <person name="Zhu S."/>
            <person name="Zimmer A."/>
            <person name="Hide W."/>
            <person name="Bult C."/>
            <person name="Grimmond S.M."/>
            <person name="Teasdale R.D."/>
            <person name="Liu E.T."/>
            <person name="Brusic V."/>
            <person name="Quackenbush J."/>
            <person name="Wahlestedt C."/>
            <person name="Mattick J.S."/>
            <person name="Hume D.A."/>
            <person name="Kai C."/>
            <person name="Sasaki D."/>
            <person name="Tomaru Y."/>
            <person name="Fukuda S."/>
            <person name="Kanamori-Katayama M."/>
            <person name="Suzuki M."/>
            <person name="Aoki J."/>
            <person name="Arakawa T."/>
            <person name="Iida J."/>
            <person name="Imamura K."/>
            <person name="Itoh M."/>
            <person name="Kato T."/>
            <person name="Kawaji H."/>
            <person name="Kawagashira N."/>
            <person name="Kawashima T."/>
            <person name="Kojima M."/>
            <person name="Kondo S."/>
            <person name="Konno H."/>
            <person name="Nakano K."/>
            <person name="Ninomiya N."/>
            <person name="Nishio T."/>
            <person name="Okada M."/>
            <person name="Plessy C."/>
            <person name="Shibata K."/>
            <person name="Shiraki T."/>
            <person name="Suzuki S."/>
            <person name="Tagami M."/>
            <person name="Waki K."/>
            <person name="Watahiki A."/>
            <person name="Okamura-Oho Y."/>
            <person name="Suzuki H."/>
            <person name="Kawai J."/>
            <person name="Hayashizaki Y."/>
        </authorList>
    </citation>
    <scope>NUCLEOTIDE SEQUENCE [LARGE SCALE MRNA] (ISOFORM 2)</scope>
    <source>
        <strain>C57BL/6J</strain>
        <tissue>Testis</tissue>
    </source>
</reference>
<reference key="4">
    <citation type="journal article" date="2003" name="J. Biol. Chem.">
        <title>Absolute gene expression patterns of thioredoxin and glutaredoxin redox systems in mouse.</title>
        <authorList>
            <person name="Jurado J."/>
            <person name="Prieto-Alamo M.-J."/>
            <person name="Madrid-Risquez J."/>
            <person name="Pueyo C."/>
        </authorList>
    </citation>
    <scope>TISSUE SPECIFICITY</scope>
    <scope>DEVELOPMENTAL STAGE</scope>
</reference>
<reference key="5">
    <citation type="journal article" date="2004" name="J. Biol. Chem.">
        <title>Glutaredoxin 2 catalyzes the reversible oxidation and glutathionylation of mitochondrial membrane thiol proteins: implications for mitochondrial redox regulation and antioxidant defense.</title>
        <authorList>
            <person name="Beer S.M."/>
            <person name="Taylor E.R."/>
            <person name="Brown S.E."/>
            <person name="Dahm C.C."/>
            <person name="Costa N.J."/>
            <person name="Runswick M.J."/>
            <person name="Murphy M.P."/>
        </authorList>
    </citation>
    <scope>FUNCTION</scope>
</reference>
<reference key="6">
    <citation type="journal article" date="2010" name="Cell">
        <title>A tissue-specific atlas of mouse protein phosphorylation and expression.</title>
        <authorList>
            <person name="Huttlin E.L."/>
            <person name="Jedrychowski M.P."/>
            <person name="Elias J.E."/>
            <person name="Goswami T."/>
            <person name="Rad R."/>
            <person name="Beausoleil S.A."/>
            <person name="Villen J."/>
            <person name="Haas W."/>
            <person name="Sowa M.E."/>
            <person name="Gygi S.P."/>
        </authorList>
    </citation>
    <scope>IDENTIFICATION BY MASS SPECTROMETRY [LARGE SCALE ANALYSIS]</scope>
    <source>
        <tissue>Brain</tissue>
        <tissue>Brown adipose tissue</tissue>
        <tissue>Heart</tissue>
        <tissue>Kidney</tissue>
    </source>
</reference>
<evidence type="ECO:0000250" key="1"/>
<evidence type="ECO:0000255" key="2"/>
<evidence type="ECO:0000255" key="3">
    <source>
        <dbReference type="PROSITE-ProRule" id="PRU00686"/>
    </source>
</evidence>
<evidence type="ECO:0000269" key="4">
    <source>
    </source>
</evidence>
<evidence type="ECO:0000269" key="5">
    <source>
    </source>
</evidence>
<evidence type="ECO:0000269" key="6">
    <source>
    </source>
</evidence>
<evidence type="ECO:0000303" key="7">
    <source>
    </source>
</evidence>
<evidence type="ECO:0000303" key="8">
    <source ref="2"/>
</evidence>
<evidence type="ECO:0000305" key="9"/>
<name>GLRX2_MOUSE</name>
<dbReference type="EMBL" id="AF380337">
    <property type="protein sequence ID" value="AAK85319.1"/>
    <property type="molecule type" value="mRNA"/>
</dbReference>
<dbReference type="EMBL" id="AF276918">
    <property type="protein sequence ID" value="AAF86465.1"/>
    <property type="status" value="ALT_FRAME"/>
    <property type="molecule type" value="mRNA"/>
</dbReference>
<dbReference type="EMBL" id="AK005853">
    <property type="protein sequence ID" value="BAB24276.1"/>
    <property type="molecule type" value="mRNA"/>
</dbReference>
<dbReference type="CCDS" id="CCDS15343.1">
    <molecule id="Q923X4-1"/>
</dbReference>
<dbReference type="CCDS" id="CCDS15344.1">
    <molecule id="Q923X4-2"/>
</dbReference>
<dbReference type="RefSeq" id="NP_001033681.1">
    <molecule id="Q923X4-1"/>
    <property type="nucleotide sequence ID" value="NM_001038592.1"/>
</dbReference>
<dbReference type="RefSeq" id="NP_001033682.1">
    <molecule id="Q923X4-2"/>
    <property type="nucleotide sequence ID" value="NM_001038593.1"/>
</dbReference>
<dbReference type="RefSeq" id="NP_001033683.1">
    <molecule id="Q923X4-2"/>
    <property type="nucleotide sequence ID" value="NM_001038594.1"/>
</dbReference>
<dbReference type="RefSeq" id="NP_075994.2">
    <molecule id="Q923X4-2"/>
    <property type="nucleotide sequence ID" value="NM_023505.2"/>
</dbReference>
<dbReference type="RefSeq" id="XP_006529919.1">
    <molecule id="Q923X4-2"/>
    <property type="nucleotide sequence ID" value="XM_006529856.3"/>
</dbReference>
<dbReference type="SMR" id="Q923X4"/>
<dbReference type="BioGRID" id="213390">
    <property type="interactions" value="15"/>
</dbReference>
<dbReference type="FunCoup" id="Q923X4">
    <property type="interactions" value="591"/>
</dbReference>
<dbReference type="STRING" id="10090.ENSMUSP00000141022"/>
<dbReference type="iPTMnet" id="Q923X4"/>
<dbReference type="PhosphoSitePlus" id="Q923X4"/>
<dbReference type="SwissPalm" id="Q923X4"/>
<dbReference type="PaxDb" id="10090-ENSMUSP00000141022"/>
<dbReference type="ProteomicsDB" id="266818">
    <molecule id="Q923X4-1"/>
</dbReference>
<dbReference type="ProteomicsDB" id="266819">
    <molecule id="Q923X4-2"/>
</dbReference>
<dbReference type="Pumba" id="Q923X4"/>
<dbReference type="DNASU" id="69367"/>
<dbReference type="Ensembl" id="ENSMUST00000111957.10">
    <molecule id="Q923X4-2"/>
    <property type="protein sequence ID" value="ENSMUSP00000107588.4"/>
    <property type="gene ID" value="ENSMUSG00000018196.19"/>
</dbReference>
<dbReference type="Ensembl" id="ENSMUST00000129653.3">
    <molecule id="Q923X4-2"/>
    <property type="protein sequence ID" value="ENSMUSP00000121010.2"/>
    <property type="gene ID" value="ENSMUSG00000018196.19"/>
</dbReference>
<dbReference type="Ensembl" id="ENSMUST00000145969.8">
    <molecule id="Q923X4-2"/>
    <property type="protein sequence ID" value="ENSMUSP00000121665.2"/>
    <property type="gene ID" value="ENSMUSG00000018196.19"/>
</dbReference>
<dbReference type="Ensembl" id="ENSMUST00000185362.7">
    <molecule id="Q923X4-1"/>
    <property type="protein sequence ID" value="ENSMUSP00000141022.2"/>
    <property type="gene ID" value="ENSMUSG00000018196.19"/>
</dbReference>
<dbReference type="GeneID" id="69367"/>
<dbReference type="KEGG" id="mmu:69367"/>
<dbReference type="UCSC" id="uc007cwz.1">
    <molecule id="Q923X4-1"/>
    <property type="organism name" value="mouse"/>
</dbReference>
<dbReference type="AGR" id="MGI:1916617"/>
<dbReference type="CTD" id="51022"/>
<dbReference type="MGI" id="MGI:1916617">
    <property type="gene designation" value="Glrx2"/>
</dbReference>
<dbReference type="VEuPathDB" id="HostDB:ENSMUSG00000018196"/>
<dbReference type="eggNOG" id="KOG1752">
    <property type="taxonomic scope" value="Eukaryota"/>
</dbReference>
<dbReference type="GeneTree" id="ENSGT00940000167705"/>
<dbReference type="HOGENOM" id="CLU_026126_7_2_1"/>
<dbReference type="InParanoid" id="Q923X4"/>
<dbReference type="OMA" id="DSTHAQF"/>
<dbReference type="OrthoDB" id="77620at9989"/>
<dbReference type="PhylomeDB" id="Q923X4"/>
<dbReference type="TreeFam" id="TF319627"/>
<dbReference type="BioGRID-ORCS" id="69367">
    <property type="hits" value="1 hit in 78 CRISPR screens"/>
</dbReference>
<dbReference type="ChiTaRS" id="Glrx2">
    <property type="organism name" value="mouse"/>
</dbReference>
<dbReference type="PRO" id="PR:Q923X4"/>
<dbReference type="Proteomes" id="UP000000589">
    <property type="component" value="Chromosome 1"/>
</dbReference>
<dbReference type="RNAct" id="Q923X4">
    <property type="molecule type" value="protein"/>
</dbReference>
<dbReference type="Bgee" id="ENSMUSG00000018196">
    <property type="expression patterns" value="Expressed in ventricular zone and 257 other cell types or tissues"/>
</dbReference>
<dbReference type="ExpressionAtlas" id="Q923X4">
    <property type="expression patterns" value="baseline and differential"/>
</dbReference>
<dbReference type="GO" id="GO:0005739">
    <property type="term" value="C:mitochondrion"/>
    <property type="evidence" value="ECO:0007005"/>
    <property type="project" value="MGI"/>
</dbReference>
<dbReference type="GO" id="GO:0005634">
    <property type="term" value="C:nucleus"/>
    <property type="evidence" value="ECO:0000250"/>
    <property type="project" value="UniProtKB"/>
</dbReference>
<dbReference type="GO" id="GO:0051537">
    <property type="term" value="F:2 iron, 2 sulfur cluster binding"/>
    <property type="evidence" value="ECO:0007669"/>
    <property type="project" value="UniProtKB-KW"/>
</dbReference>
<dbReference type="GO" id="GO:0046872">
    <property type="term" value="F:metal ion binding"/>
    <property type="evidence" value="ECO:0007669"/>
    <property type="project" value="UniProtKB-KW"/>
</dbReference>
<dbReference type="GO" id="GO:0015035">
    <property type="term" value="F:protein-disulfide reductase activity"/>
    <property type="evidence" value="ECO:0000314"/>
    <property type="project" value="MGI"/>
</dbReference>
<dbReference type="CDD" id="cd03419">
    <property type="entry name" value="GRX_GRXh_1_2_like"/>
    <property type="match status" value="1"/>
</dbReference>
<dbReference type="FunFam" id="3.40.30.10:FF:000026">
    <property type="entry name" value="Glutaredoxin 2"/>
    <property type="match status" value="1"/>
</dbReference>
<dbReference type="Gene3D" id="3.40.30.10">
    <property type="entry name" value="Glutaredoxin"/>
    <property type="match status" value="1"/>
</dbReference>
<dbReference type="InterPro" id="IPR002109">
    <property type="entry name" value="Glutaredoxin"/>
</dbReference>
<dbReference type="InterPro" id="IPR011899">
    <property type="entry name" value="Glutaredoxin_euk/vir"/>
</dbReference>
<dbReference type="InterPro" id="IPR014025">
    <property type="entry name" value="Glutaredoxin_subgr"/>
</dbReference>
<dbReference type="InterPro" id="IPR036249">
    <property type="entry name" value="Thioredoxin-like_sf"/>
</dbReference>
<dbReference type="NCBIfam" id="TIGR02180">
    <property type="entry name" value="GRX_euk"/>
    <property type="match status" value="1"/>
</dbReference>
<dbReference type="PANTHER" id="PTHR46679">
    <property type="match status" value="1"/>
</dbReference>
<dbReference type="PANTHER" id="PTHR46679:SF1">
    <property type="entry name" value="GLUTAREDOXIN-2, MITOCHONDRIAL"/>
    <property type="match status" value="1"/>
</dbReference>
<dbReference type="Pfam" id="PF00462">
    <property type="entry name" value="Glutaredoxin"/>
    <property type="match status" value="1"/>
</dbReference>
<dbReference type="PRINTS" id="PR00160">
    <property type="entry name" value="GLUTAREDOXIN"/>
</dbReference>
<dbReference type="SUPFAM" id="SSF52833">
    <property type="entry name" value="Thioredoxin-like"/>
    <property type="match status" value="1"/>
</dbReference>
<dbReference type="PROSITE" id="PS51354">
    <property type="entry name" value="GLUTAREDOXIN_2"/>
    <property type="match status" value="1"/>
</dbReference>
<comment type="function">
    <text evidence="4 6">Glutathione-dependent oxidoreductase that facilitates the maintenance of mitochondrial redox homeostasis upon induction of apoptosis by oxidative stress. Involved in response to hydrogen peroxide and regulation of apoptosis caused by oxidative stress. Acts as a very efficient catalyst of monothiol reactions because of its high affinity for protein glutathione-mixed disulfides. Can receive electrons not only from glutathione (GSH), but also from thioredoxin reductase supporting both monothiol and dithiol reactions. Efficiently catalyzes both glutathionylation and deglutathionylation of mitochondrial complex I, which in turn regulates the superoxide production by the complex. Overexpression decreases the susceptibility to apoptosis and prevents loss of cardiolipin and cytochrome c release.</text>
</comment>
<comment type="activity regulation">
    <text evidence="1">The 2Fe-2S present in the homodimer leads to inactivation of the enzyme. The 2Fe-2S may serve as a redox sensor: the presence of one-electron oxidants or reductants leading to the loss of the 2Fe-2S cluster, subsequent monomerization and activation of the enzyme (By similarity).</text>
</comment>
<comment type="biophysicochemical properties">
    <kinetics>
        <KM evidence="4">1.68 mM for HEDS</KM>
        <KM evidence="4">1.77 mM for S-sulfocysteine</KM>
        <KM evidence="4">0.3 mM for L-cystine</KM>
    </kinetics>
</comment>
<comment type="subunit">
    <text evidence="1">Monomer; active form. Homodimer; inactive form. The homodimer is probably linked by 1 2Fe-2S cluster (By similarity).</text>
</comment>
<comment type="subcellular location">
    <molecule>Isoform 1</molecule>
    <subcellularLocation>
        <location>Mitochondrion</location>
    </subcellularLocation>
</comment>
<comment type="subcellular location">
    <molecule>Isoform 2</molecule>
    <subcellularLocation>
        <location>Nucleus</location>
    </subcellularLocation>
</comment>
<comment type="alternative products">
    <event type="alternative splicing"/>
    <isoform>
        <id>Q923X4-1</id>
        <name>1</name>
        <name>Grx2a</name>
        <sequence type="displayed"/>
    </isoform>
    <isoform>
        <id>Q923X4-2</id>
        <name>2</name>
        <sequence type="described" ref="VSP_015222"/>
    </isoform>
</comment>
<comment type="tissue specificity">
    <text evidence="5">Widely expressed. Highly expressed in testis, and at much lower level in kidney and brain.</text>
</comment>
<comment type="developmental stage">
    <text evidence="5">During development, it is expressed at highest level at 11 dpc.</text>
</comment>
<comment type="similarity">
    <text evidence="9">Belongs to the glutaredoxin family.</text>
</comment>
<comment type="sequence caution" evidence="9">
    <conflict type="frameshift">
        <sequence resource="EMBL-CDS" id="AAF86465"/>
    </conflict>
</comment>
<feature type="transit peptide" description="Mitochondrion" evidence="2">
    <location>
        <begin position="1"/>
        <end position="19"/>
    </location>
</feature>
<feature type="chain" id="PRO_0000011629" description="Glutaredoxin-2, mitochondrial">
    <location>
        <begin position="20"/>
        <end position="156"/>
    </location>
</feature>
<feature type="domain" description="Glutaredoxin" evidence="3">
    <location>
        <begin position="50"/>
        <end position="150"/>
    </location>
</feature>
<feature type="binding site" description="in inactive form" evidence="1">
    <location>
        <position position="61"/>
    </location>
    <ligand>
        <name>[2Fe-2S] cluster</name>
        <dbReference type="ChEBI" id="CHEBI:190135"/>
        <note>ligand shared between dimeric partners</note>
    </ligand>
</feature>
<feature type="binding site" evidence="1">
    <location>
        <position position="67"/>
    </location>
    <ligand>
        <name>glutathione</name>
        <dbReference type="ChEBI" id="CHEBI:57925"/>
    </ligand>
</feature>
<feature type="binding site" evidence="1">
    <location>
        <position position="102"/>
    </location>
    <ligand>
        <name>glutathione</name>
        <dbReference type="ChEBI" id="CHEBI:57925"/>
    </ligand>
</feature>
<feature type="binding site" evidence="1">
    <location>
        <position position="114"/>
    </location>
    <ligand>
        <name>glutathione</name>
        <dbReference type="ChEBI" id="CHEBI:57925"/>
    </ligand>
</feature>
<feature type="binding site" description="in inactive form" evidence="1">
    <location>
        <position position="146"/>
    </location>
    <ligand>
        <name>[2Fe-2S] cluster</name>
        <dbReference type="ChEBI" id="CHEBI:190135"/>
        <note>ligand shared between dimeric partners</note>
    </ligand>
</feature>
<feature type="modified residue" description="S-glutathionyl cysteine; alternate" evidence="1">
    <location>
        <position position="70"/>
    </location>
</feature>
<feature type="disulfide bond" description="Redox-active; alternate" evidence="1">
    <location>
        <begin position="70"/>
        <end position="73"/>
    </location>
</feature>
<feature type="splice variant" id="VSP_015222" description="In isoform 2." evidence="7 8">
    <location>
        <begin position="1"/>
        <end position="33"/>
    </location>
</feature>
<gene>
    <name type="primary">Glrx2</name>
    <name type="synonym">Grx2</name>
</gene>
<organism>
    <name type="scientific">Mus musculus</name>
    <name type="common">Mouse</name>
    <dbReference type="NCBI Taxonomy" id="10090"/>
    <lineage>
        <taxon>Eukaryota</taxon>
        <taxon>Metazoa</taxon>
        <taxon>Chordata</taxon>
        <taxon>Craniata</taxon>
        <taxon>Vertebrata</taxon>
        <taxon>Euteleostomi</taxon>
        <taxon>Mammalia</taxon>
        <taxon>Eutheria</taxon>
        <taxon>Euarchontoglires</taxon>
        <taxon>Glires</taxon>
        <taxon>Rodentia</taxon>
        <taxon>Myomorpha</taxon>
        <taxon>Muroidea</taxon>
        <taxon>Muridae</taxon>
        <taxon>Murinae</taxon>
        <taxon>Mus</taxon>
        <taxon>Mus</taxon>
    </lineage>
</organism>
<proteinExistence type="evidence at protein level"/>
<sequence>MSWRRAASVGRRLVASGRILAGRRGAAGAAGSGMGNSTSSFWGKSTTTPVNQIQETISNNCVVIFSKTSCSYCSMAKKIFHDMNVNYKAVELDMLEYGNQFQDALHKMTGERTVPRIFVNGRFIGGAADTHRLHKEGKLLPLVHQCYLKKKQEERH</sequence>
<accession>Q923X4</accession>
<accession>Q9DAG8</accession>
<accession>Q9JHY6</accession>
<keyword id="KW-0001">2Fe-2S</keyword>
<keyword id="KW-0025">Alternative splicing</keyword>
<keyword id="KW-1015">Disulfide bond</keyword>
<keyword id="KW-0249">Electron transport</keyword>
<keyword id="KW-0318">Glutathionylation</keyword>
<keyword id="KW-0408">Iron</keyword>
<keyword id="KW-0411">Iron-sulfur</keyword>
<keyword id="KW-0479">Metal-binding</keyword>
<keyword id="KW-0496">Mitochondrion</keyword>
<keyword id="KW-0539">Nucleus</keyword>
<keyword id="KW-0676">Redox-active center</keyword>
<keyword id="KW-1185">Reference proteome</keyword>
<keyword id="KW-0809">Transit peptide</keyword>
<keyword id="KW-0813">Transport</keyword>